<accession>Q50940</accession>
<comment type="function">
    <text>Reversible hydration of carbon dioxide.</text>
</comment>
<comment type="catalytic activity">
    <reaction>
        <text>hydrogencarbonate + H(+) = CO2 + H2O</text>
        <dbReference type="Rhea" id="RHEA:10748"/>
        <dbReference type="ChEBI" id="CHEBI:15377"/>
        <dbReference type="ChEBI" id="CHEBI:15378"/>
        <dbReference type="ChEBI" id="CHEBI:16526"/>
        <dbReference type="ChEBI" id="CHEBI:17544"/>
        <dbReference type="EC" id="4.2.1.1"/>
    </reaction>
</comment>
<comment type="cofactor">
    <cofactor evidence="3">
        <name>Zn(2+)</name>
        <dbReference type="ChEBI" id="CHEBI:29105"/>
    </cofactor>
</comment>
<comment type="subunit">
    <text evidence="3">Homodimer.</text>
</comment>
<comment type="subcellular location">
    <subcellularLocation>
        <location evidence="4">Periplasm</location>
    </subcellularLocation>
</comment>
<comment type="similarity">
    <text evidence="4">Belongs to the alpha-carbonic anhydrase family.</text>
</comment>
<keyword id="KW-0002">3D-structure</keyword>
<keyword id="KW-1015">Disulfide bond</keyword>
<keyword id="KW-0456">Lyase</keyword>
<keyword id="KW-0479">Metal-binding</keyword>
<keyword id="KW-0574">Periplasm</keyword>
<keyword id="KW-0732">Signal</keyword>
<keyword id="KW-0862">Zinc</keyword>
<evidence type="ECO:0000250" key="1">
    <source>
        <dbReference type="UniProtKB" id="P00918"/>
    </source>
</evidence>
<evidence type="ECO:0000255" key="2">
    <source>
        <dbReference type="PROSITE-ProRule" id="PRU01134"/>
    </source>
</evidence>
<evidence type="ECO:0000269" key="3">
    <source>
    </source>
</evidence>
<evidence type="ECO:0000305" key="4"/>
<evidence type="ECO:0007829" key="5">
    <source>
        <dbReference type="PDB" id="1KOP"/>
    </source>
</evidence>
<evidence type="ECO:0007829" key="6">
    <source>
        <dbReference type="PDB" id="1KOQ"/>
    </source>
</evidence>
<evidence type="ECO:0007829" key="7">
    <source>
        <dbReference type="PDB" id="8DPC"/>
    </source>
</evidence>
<evidence type="ECO:0007829" key="8">
    <source>
        <dbReference type="PDB" id="8DPO"/>
    </source>
</evidence>
<evidence type="ECO:0007829" key="9">
    <source>
        <dbReference type="PDB" id="8DYQ"/>
    </source>
</evidence>
<dbReference type="EC" id="4.2.1.1"/>
<dbReference type="EMBL" id="Y11152">
    <property type="protein sequence ID" value="CAA72038.1"/>
    <property type="molecule type" value="Genomic_DNA"/>
</dbReference>
<dbReference type="EMBL" id="U11547">
    <property type="protein sequence ID" value="AAA75359.1"/>
    <property type="molecule type" value="Genomic_DNA"/>
</dbReference>
<dbReference type="PIR" id="C56262">
    <property type="entry name" value="C56262"/>
</dbReference>
<dbReference type="RefSeq" id="WP_003688976.1">
    <property type="nucleotide sequence ID" value="NZ_WHPL01000002.1"/>
</dbReference>
<dbReference type="PDB" id="1KOP">
    <property type="method" value="X-ray"/>
    <property type="resolution" value="1.90 A"/>
    <property type="chains" value="A/B=30-252"/>
</dbReference>
<dbReference type="PDB" id="1KOQ">
    <property type="method" value="X-ray"/>
    <property type="resolution" value="1.90 A"/>
    <property type="chains" value="A/B=30-252"/>
</dbReference>
<dbReference type="PDB" id="8DPC">
    <property type="method" value="X-ray"/>
    <property type="resolution" value="2.41 A"/>
    <property type="chains" value="A/C/E/G=27-252"/>
</dbReference>
<dbReference type="PDB" id="8DPO">
    <property type="method" value="X-ray"/>
    <property type="resolution" value="2.60 A"/>
    <property type="chains" value="A/C/E/G=27-252"/>
</dbReference>
<dbReference type="PDB" id="8DQF">
    <property type="method" value="X-ray"/>
    <property type="resolution" value="2.80 A"/>
    <property type="chains" value="A/C/E/G=27-252"/>
</dbReference>
<dbReference type="PDB" id="8DR2">
    <property type="method" value="X-ray"/>
    <property type="resolution" value="2.81 A"/>
    <property type="chains" value="A/C/E/G=27-252"/>
</dbReference>
<dbReference type="PDB" id="8DRB">
    <property type="method" value="X-ray"/>
    <property type="resolution" value="2.59 A"/>
    <property type="chains" value="A/C/E/G=27-252"/>
</dbReference>
<dbReference type="PDB" id="8DYQ">
    <property type="method" value="X-ray"/>
    <property type="resolution" value="2.15 A"/>
    <property type="chains" value="A/C/E/G=27-252"/>
</dbReference>
<dbReference type="PDBsum" id="1KOP"/>
<dbReference type="PDBsum" id="1KOQ"/>
<dbReference type="PDBsum" id="8DPC"/>
<dbReference type="PDBsum" id="8DPO"/>
<dbReference type="PDBsum" id="8DQF"/>
<dbReference type="PDBsum" id="8DR2"/>
<dbReference type="PDBsum" id="8DRB"/>
<dbReference type="PDBsum" id="8DYQ"/>
<dbReference type="SMR" id="Q50940"/>
<dbReference type="GeneID" id="66752914"/>
<dbReference type="OMA" id="GHTIQAN"/>
<dbReference type="BRENDA" id="4.2.1.1">
    <property type="organism ID" value="3590"/>
</dbReference>
<dbReference type="EvolutionaryTrace" id="Q50940"/>
<dbReference type="GO" id="GO:0042597">
    <property type="term" value="C:periplasmic space"/>
    <property type="evidence" value="ECO:0007669"/>
    <property type="project" value="UniProtKB-SubCell"/>
</dbReference>
<dbReference type="GO" id="GO:0004089">
    <property type="term" value="F:carbonate dehydratase activity"/>
    <property type="evidence" value="ECO:0007669"/>
    <property type="project" value="UniProtKB-EC"/>
</dbReference>
<dbReference type="GO" id="GO:0008270">
    <property type="term" value="F:zinc ion binding"/>
    <property type="evidence" value="ECO:0007669"/>
    <property type="project" value="InterPro"/>
</dbReference>
<dbReference type="CDD" id="cd03124">
    <property type="entry name" value="alpha_CA_prokaryotic_like"/>
    <property type="match status" value="1"/>
</dbReference>
<dbReference type="Gene3D" id="3.10.200.10">
    <property type="entry name" value="Alpha carbonic anhydrase"/>
    <property type="match status" value="1"/>
</dbReference>
<dbReference type="InterPro" id="IPR041891">
    <property type="entry name" value="Alpha_CA_prokaryot-like"/>
</dbReference>
<dbReference type="InterPro" id="IPR001148">
    <property type="entry name" value="CA_dom"/>
</dbReference>
<dbReference type="InterPro" id="IPR036398">
    <property type="entry name" value="CA_dom_sf"/>
</dbReference>
<dbReference type="InterPro" id="IPR023561">
    <property type="entry name" value="Carbonic_anhydrase_a-class"/>
</dbReference>
<dbReference type="InterPro" id="IPR018338">
    <property type="entry name" value="Carbonic_anhydrase_a-class_CS"/>
</dbReference>
<dbReference type="PANTHER" id="PTHR18952">
    <property type="entry name" value="CARBONIC ANHYDRASE"/>
    <property type="match status" value="1"/>
</dbReference>
<dbReference type="PANTHER" id="PTHR18952:SF265">
    <property type="entry name" value="CARBONIC ANHYDRASE"/>
    <property type="match status" value="1"/>
</dbReference>
<dbReference type="Pfam" id="PF00194">
    <property type="entry name" value="Carb_anhydrase"/>
    <property type="match status" value="1"/>
</dbReference>
<dbReference type="SMART" id="SM01057">
    <property type="entry name" value="Carb_anhydrase"/>
    <property type="match status" value="1"/>
</dbReference>
<dbReference type="SUPFAM" id="SSF51069">
    <property type="entry name" value="Carbonic anhydrase"/>
    <property type="match status" value="1"/>
</dbReference>
<dbReference type="PROSITE" id="PS00162">
    <property type="entry name" value="ALPHA_CA_1"/>
    <property type="match status" value="1"/>
</dbReference>
<dbReference type="PROSITE" id="PS51144">
    <property type="entry name" value="ALPHA_CA_2"/>
    <property type="match status" value="1"/>
</dbReference>
<sequence length="252" mass="28085">MPRFPRTLPRLTAVLLLACTAFSAAAHGNHTHWGYTGHDSPESWGNLSEEFRLCSTGKNQSPVNITETVSGKLPAIKVNYKPSMVDVENNGHTIQVNYPEGGNTLTVNGRTYTLKQFHFHVPSENQIKGRTFPMEAHFVHLDENKQPLVLAVLYEAGKTNGRLSSIWNVMPMTAGKVKLNQPFDASTLLPKRLKYYRFAGSLTTPPCTEGVSWLVLKTYDHIDQAQAEKFTRAVGSENNRPVQPLNARVVIE</sequence>
<organism>
    <name type="scientific">Neisseria gonorrhoeae</name>
    <dbReference type="NCBI Taxonomy" id="485"/>
    <lineage>
        <taxon>Bacteria</taxon>
        <taxon>Pseudomonadati</taxon>
        <taxon>Pseudomonadota</taxon>
        <taxon>Betaproteobacteria</taxon>
        <taxon>Neisseriales</taxon>
        <taxon>Neisseriaceae</taxon>
        <taxon>Neisseria</taxon>
    </lineage>
</organism>
<name>CAH_NEIGO</name>
<reference key="1">
    <citation type="journal article" date="1997" name="Eur. J. Biochem.">
        <title>The complete sequence, expression in Escherichia coli, purification and some properties of carbonic anhydrase from Neisseria gonorrhoeae.</title>
        <authorList>
            <person name="Chirica L.C."/>
            <person name="Elleby B."/>
            <person name="Jonsson B.-H."/>
            <person name="Lindskog S."/>
        </authorList>
    </citation>
    <scope>NUCLEOTIDE SEQUENCE [GENOMIC DNA]</scope>
    <scope>CHARACTERIZATION</scope>
</reference>
<reference key="2">
    <citation type="journal article" date="1995" name="J. Bacteriol.">
        <title>A promoter associated with the neisserial repeat can be used to transcribe the uvrB gene from Neisseria gonorrhoeae.</title>
        <authorList>
            <person name="Black C.G."/>
            <person name="Fyfe J.A.M."/>
            <person name="Davies J.K."/>
        </authorList>
    </citation>
    <scope>NUCLEOTIDE SEQUENCE [GENOMIC DNA] OF 50-252</scope>
    <source>
        <strain>MS11</strain>
    </source>
</reference>
<reference key="3">
    <citation type="journal article" date="1998" name="J. Mol. Biol.">
        <title>Crystal structure of carbonic anhydrase from Neisseria gonorrhoeae and its complex with the inhibitor acetazolamide.</title>
        <authorList>
            <person name="Huang S."/>
            <person name="Xue Y."/>
            <person name="Sauer-Eriksson E."/>
            <person name="Chirica L."/>
            <person name="Lindskog S."/>
            <person name="Jonsson B.-H."/>
        </authorList>
    </citation>
    <scope>X-RAY CRYSTALLOGRAPHY (1.9 ANGSTROMS) OF 30-252 IN COMPLEX WITH TINC ION AND INHIBITOR ACETAZOLAMIDE</scope>
    <scope>COFACTOR</scope>
    <scope>DISULFIDE BOND</scope>
</reference>
<gene>
    <name type="primary">cah</name>
</gene>
<proteinExistence type="evidence at protein level"/>
<feature type="signal peptide">
    <location>
        <begin position="1"/>
        <end position="26"/>
    </location>
</feature>
<feature type="chain" id="PRO_0000004266" description="Carbonic anhydrase">
    <location>
        <begin position="27"/>
        <end position="252"/>
    </location>
</feature>
<feature type="domain" description="Alpha-carbonic anhydrase" evidence="2">
    <location>
        <begin position="31"/>
        <end position="252"/>
    </location>
</feature>
<feature type="active site" description="Proton acceptor" evidence="1">
    <location>
        <position position="92"/>
    </location>
</feature>
<feature type="binding site" evidence="3">
    <location>
        <position position="118"/>
    </location>
    <ligand>
        <name>Zn(2+)</name>
        <dbReference type="ChEBI" id="CHEBI:29105"/>
        <note>catalytic</note>
    </ligand>
</feature>
<feature type="binding site" evidence="3">
    <location>
        <position position="120"/>
    </location>
    <ligand>
        <name>Zn(2+)</name>
        <dbReference type="ChEBI" id="CHEBI:29105"/>
        <note>catalytic</note>
    </ligand>
</feature>
<feature type="binding site" evidence="3">
    <location>
        <position position="137"/>
    </location>
    <ligand>
        <name>Zn(2+)</name>
        <dbReference type="ChEBI" id="CHEBI:29105"/>
        <note>catalytic</note>
    </ligand>
</feature>
<feature type="binding site" evidence="3">
    <location>
        <begin position="203"/>
        <end position="204"/>
    </location>
    <ligand>
        <name>substrate</name>
    </ligand>
</feature>
<feature type="disulfide bond" evidence="3">
    <location>
        <begin position="54"/>
        <end position="207"/>
    </location>
</feature>
<feature type="helix" evidence="5">
    <location>
        <begin position="37"/>
        <end position="39"/>
    </location>
</feature>
<feature type="helix" evidence="5">
    <location>
        <begin position="41"/>
        <end position="43"/>
    </location>
</feature>
<feature type="helix" evidence="5">
    <location>
        <begin position="44"/>
        <end position="47"/>
    </location>
</feature>
<feature type="helix" evidence="5">
    <location>
        <begin position="49"/>
        <end position="52"/>
    </location>
</feature>
<feature type="helix" evidence="5">
    <location>
        <begin position="53"/>
        <end position="56"/>
    </location>
</feature>
<feature type="strand" evidence="9">
    <location>
        <begin position="67"/>
        <end position="71"/>
    </location>
</feature>
<feature type="strand" evidence="5">
    <location>
        <begin position="76"/>
        <end position="79"/>
    </location>
</feature>
<feature type="strand" evidence="5">
    <location>
        <begin position="86"/>
        <end position="89"/>
    </location>
</feature>
<feature type="strand" evidence="5">
    <location>
        <begin position="94"/>
        <end position="97"/>
    </location>
</feature>
<feature type="strand" evidence="8">
    <location>
        <begin position="99"/>
        <end position="101"/>
    </location>
</feature>
<feature type="strand" evidence="5">
    <location>
        <begin position="104"/>
        <end position="107"/>
    </location>
</feature>
<feature type="strand" evidence="5">
    <location>
        <begin position="110"/>
        <end position="122"/>
    </location>
</feature>
<feature type="strand" evidence="5">
    <location>
        <begin position="124"/>
        <end position="127"/>
    </location>
</feature>
<feature type="strand" evidence="5">
    <location>
        <begin position="133"/>
        <end position="141"/>
    </location>
</feature>
<feature type="strand" evidence="5">
    <location>
        <begin position="147"/>
        <end position="156"/>
    </location>
</feature>
<feature type="helix" evidence="6">
    <location>
        <begin position="161"/>
        <end position="163"/>
    </location>
</feature>
<feature type="helix" evidence="5">
    <location>
        <begin position="164"/>
        <end position="167"/>
    </location>
</feature>
<feature type="strand" evidence="5">
    <location>
        <begin position="172"/>
        <end position="178"/>
    </location>
</feature>
<feature type="strand" evidence="7">
    <location>
        <begin position="180"/>
        <end position="183"/>
    </location>
</feature>
<feature type="helix" evidence="5">
    <location>
        <begin position="185"/>
        <end position="188"/>
    </location>
</feature>
<feature type="strand" evidence="5">
    <location>
        <begin position="195"/>
        <end position="201"/>
    </location>
</feature>
<feature type="strand" evidence="5">
    <location>
        <begin position="209"/>
        <end position="218"/>
    </location>
</feature>
<feature type="strand" evidence="5">
    <location>
        <begin position="220"/>
        <end position="222"/>
    </location>
</feature>
<feature type="helix" evidence="5">
    <location>
        <begin position="224"/>
        <end position="234"/>
    </location>
</feature>
<feature type="strand" evidence="9">
    <location>
        <begin position="250"/>
        <end position="252"/>
    </location>
</feature>
<protein>
    <recommendedName>
        <fullName>Carbonic anhydrase</fullName>
        <ecNumber>4.2.1.1</ecNumber>
    </recommendedName>
    <alternativeName>
        <fullName>Carbonate dehydratase</fullName>
    </alternativeName>
</protein>